<reference key="1">
    <citation type="journal article" date="2009" name="Genome Res.">
        <title>Newly introduced genomic prophage islands are critical determinants of in vivo competitiveness in the Liverpool epidemic strain of Pseudomonas aeruginosa.</title>
        <authorList>
            <person name="Winstanley C."/>
            <person name="Langille M.G.I."/>
            <person name="Fothergill J.L."/>
            <person name="Kukavica-Ibrulj I."/>
            <person name="Paradis-Bleau C."/>
            <person name="Sanschagrin F."/>
            <person name="Thomson N.R."/>
            <person name="Winsor G.L."/>
            <person name="Quail M.A."/>
            <person name="Lennard N."/>
            <person name="Bignell A."/>
            <person name="Clarke L."/>
            <person name="Seeger K."/>
            <person name="Saunders D."/>
            <person name="Harris D."/>
            <person name="Parkhill J."/>
            <person name="Hancock R.E.W."/>
            <person name="Brinkman F.S.L."/>
            <person name="Levesque R.C."/>
        </authorList>
    </citation>
    <scope>NUCLEOTIDE SEQUENCE [LARGE SCALE GENOMIC DNA]</scope>
    <source>
        <strain>LESB58</strain>
    </source>
</reference>
<comment type="function">
    <text evidence="1">Catalyzes the transfer of 4-deoxy-4-formamido-L-arabinose from UDP to undecaprenyl phosphate. The modified arabinose is attached to lipid A and is required for resistance to polymyxin and cationic antimicrobial peptides.</text>
</comment>
<comment type="catalytic activity">
    <reaction evidence="1">
        <text>UDP-4-deoxy-4-formamido-beta-L-arabinose + di-trans,octa-cis-undecaprenyl phosphate = 4-deoxy-4-formamido-alpha-L-arabinopyranosyl di-trans,octa-cis-undecaprenyl phosphate + UDP</text>
        <dbReference type="Rhea" id="RHEA:27722"/>
        <dbReference type="ChEBI" id="CHEBI:58223"/>
        <dbReference type="ChEBI" id="CHEBI:58709"/>
        <dbReference type="ChEBI" id="CHEBI:58909"/>
        <dbReference type="ChEBI" id="CHEBI:60392"/>
        <dbReference type="EC" id="2.4.2.53"/>
    </reaction>
</comment>
<comment type="pathway">
    <text evidence="1">Glycolipid biosynthesis; 4-amino-4-deoxy-alpha-L-arabinose undecaprenyl phosphate biosynthesis; 4-amino-4-deoxy-alpha-L-arabinose undecaprenyl phosphate from UDP-4-deoxy-4-formamido-beta-L-arabinose and undecaprenyl phosphate: step 1/2.</text>
</comment>
<comment type="pathway">
    <text evidence="1">Bacterial outer membrane biogenesis; lipopolysaccharide biosynthesis.</text>
</comment>
<comment type="subcellular location">
    <subcellularLocation>
        <location evidence="1">Cell inner membrane</location>
        <topology evidence="1">Multi-pass membrane protein</topology>
    </subcellularLocation>
</comment>
<comment type="similarity">
    <text evidence="1">Belongs to the glycosyltransferase 2 family.</text>
</comment>
<protein>
    <recommendedName>
        <fullName evidence="1">Undecaprenyl-phosphate 4-deoxy-4-formamido-L-arabinose transferase</fullName>
        <ecNumber evidence="1">2.4.2.53</ecNumber>
    </recommendedName>
    <alternativeName>
        <fullName evidence="1">Undecaprenyl-phosphate Ara4FN transferase</fullName>
        <shortName evidence="1">Ara4FN transferase</shortName>
    </alternativeName>
</protein>
<evidence type="ECO:0000255" key="1">
    <source>
        <dbReference type="HAMAP-Rule" id="MF_01164"/>
    </source>
</evidence>
<organism>
    <name type="scientific">Pseudomonas aeruginosa (strain LESB58)</name>
    <dbReference type="NCBI Taxonomy" id="557722"/>
    <lineage>
        <taxon>Bacteria</taxon>
        <taxon>Pseudomonadati</taxon>
        <taxon>Pseudomonadota</taxon>
        <taxon>Gammaproteobacteria</taxon>
        <taxon>Pseudomonadales</taxon>
        <taxon>Pseudomonadaceae</taxon>
        <taxon>Pseudomonas</taxon>
    </lineage>
</organism>
<name>ARNC_PSEA8</name>
<gene>
    <name evidence="1" type="primary">arnC</name>
    <name type="ordered locus">PLES_14801</name>
</gene>
<keyword id="KW-0046">Antibiotic resistance</keyword>
<keyword id="KW-0997">Cell inner membrane</keyword>
<keyword id="KW-1003">Cell membrane</keyword>
<keyword id="KW-0328">Glycosyltransferase</keyword>
<keyword id="KW-0441">Lipid A biosynthesis</keyword>
<keyword id="KW-0444">Lipid biosynthesis</keyword>
<keyword id="KW-0443">Lipid metabolism</keyword>
<keyword id="KW-0448">Lipopolysaccharide biosynthesis</keyword>
<keyword id="KW-0472">Membrane</keyword>
<keyword id="KW-0808">Transferase</keyword>
<keyword id="KW-0812">Transmembrane</keyword>
<keyword id="KW-1133">Transmembrane helix</keyword>
<feature type="chain" id="PRO_0000380264" description="Undecaprenyl-phosphate 4-deoxy-4-formamido-L-arabinose transferase">
    <location>
        <begin position="1"/>
        <end position="339"/>
    </location>
</feature>
<feature type="transmembrane region" description="Helical" evidence="1">
    <location>
        <begin position="235"/>
        <end position="255"/>
    </location>
</feature>
<feature type="transmembrane region" description="Helical" evidence="1">
    <location>
        <begin position="269"/>
        <end position="289"/>
    </location>
</feature>
<sequence length="339" mass="37296">MKPYPIDLVSVVIPVYNEEASLPELLRRTEAACLELGRAFEIVLVDDGSRDRSAELLQAAAERDGSAVVAVILNRNYGQHAAILAGFEQSRGDLVITLDADLQNPPEEIPRLVERAAQGYDVVGSIRAERQDSAWRRWPSRLVNLAVQRSTGVAMHDYGCMLRAYRRSIVEAMLACRERSTFIPILANGFARHTCEIRVAHAERAHGESKYSAMRLLNLMFDLVTCMTTTPLRLLSLVGGGMALAGFLFALFLLVLRLAFGAAWAGNGLFVLFAVLFMFSGVQLLGMGLLGEYLGRMYSDVRARPRFFIERVVRATPSALPSALQRAGFTSSSSEPSTP</sequence>
<proteinExistence type="inferred from homology"/>
<accession>B7VBN3</accession>
<dbReference type="EC" id="2.4.2.53" evidence="1"/>
<dbReference type="EMBL" id="FM209186">
    <property type="protein sequence ID" value="CAW26208.1"/>
    <property type="molecule type" value="Genomic_DNA"/>
</dbReference>
<dbReference type="RefSeq" id="WP_003112880.1">
    <property type="nucleotide sequence ID" value="NC_011770.1"/>
</dbReference>
<dbReference type="SMR" id="B7VBN3"/>
<dbReference type="CAZy" id="GT2">
    <property type="family name" value="Glycosyltransferase Family 2"/>
</dbReference>
<dbReference type="KEGG" id="pag:PLES_14801"/>
<dbReference type="HOGENOM" id="CLU_033536_0_0_6"/>
<dbReference type="UniPathway" id="UPA00030"/>
<dbReference type="UniPathway" id="UPA00036">
    <property type="reaction ID" value="UER00495"/>
</dbReference>
<dbReference type="GO" id="GO:0005886">
    <property type="term" value="C:plasma membrane"/>
    <property type="evidence" value="ECO:0007669"/>
    <property type="project" value="UniProtKB-SubCell"/>
</dbReference>
<dbReference type="GO" id="GO:0016780">
    <property type="term" value="F:phosphotransferase activity, for other substituted phosphate groups"/>
    <property type="evidence" value="ECO:0007669"/>
    <property type="project" value="UniProtKB-UniRule"/>
</dbReference>
<dbReference type="GO" id="GO:0099621">
    <property type="term" value="F:undecaprenyl-phosphate 4-deoxy-4-formamido-L-arabinose transferase activity"/>
    <property type="evidence" value="ECO:0007669"/>
    <property type="project" value="UniProtKB-EC"/>
</dbReference>
<dbReference type="GO" id="GO:0036108">
    <property type="term" value="P:4-amino-4-deoxy-alpha-L-arabinopyranosyl undecaprenyl phosphate biosynthetic process"/>
    <property type="evidence" value="ECO:0007669"/>
    <property type="project" value="UniProtKB-UniRule"/>
</dbReference>
<dbReference type="GO" id="GO:0009245">
    <property type="term" value="P:lipid A biosynthetic process"/>
    <property type="evidence" value="ECO:0007669"/>
    <property type="project" value="UniProtKB-UniRule"/>
</dbReference>
<dbReference type="GO" id="GO:0009103">
    <property type="term" value="P:lipopolysaccharide biosynthetic process"/>
    <property type="evidence" value="ECO:0007669"/>
    <property type="project" value="UniProtKB-UniRule"/>
</dbReference>
<dbReference type="GO" id="GO:0046677">
    <property type="term" value="P:response to antibiotic"/>
    <property type="evidence" value="ECO:0007669"/>
    <property type="project" value="UniProtKB-KW"/>
</dbReference>
<dbReference type="CDD" id="cd04187">
    <property type="entry name" value="DPM1_like_bac"/>
    <property type="match status" value="1"/>
</dbReference>
<dbReference type="FunFam" id="3.90.550.10:FF:000019">
    <property type="entry name" value="Undecaprenyl-phosphate 4-deoxy-4-formamido-L-arabinose transferase"/>
    <property type="match status" value="1"/>
</dbReference>
<dbReference type="Gene3D" id="3.90.550.10">
    <property type="entry name" value="Spore Coat Polysaccharide Biosynthesis Protein SpsA, Chain A"/>
    <property type="match status" value="1"/>
</dbReference>
<dbReference type="HAMAP" id="MF_01164">
    <property type="entry name" value="ArnC_transfer"/>
    <property type="match status" value="1"/>
</dbReference>
<dbReference type="InterPro" id="IPR022857">
    <property type="entry name" value="ArnC_tfrase"/>
</dbReference>
<dbReference type="InterPro" id="IPR001173">
    <property type="entry name" value="Glyco_trans_2-like"/>
</dbReference>
<dbReference type="InterPro" id="IPR050256">
    <property type="entry name" value="Glycosyltransferase_2"/>
</dbReference>
<dbReference type="InterPro" id="IPR029044">
    <property type="entry name" value="Nucleotide-diphossugar_trans"/>
</dbReference>
<dbReference type="NCBIfam" id="NF007986">
    <property type="entry name" value="PRK10714.1"/>
    <property type="match status" value="1"/>
</dbReference>
<dbReference type="PANTHER" id="PTHR48090:SF3">
    <property type="entry name" value="UNDECAPRENYL-PHOSPHATE 4-DEOXY-4-FORMAMIDO-L-ARABINOSE TRANSFERASE"/>
    <property type="match status" value="1"/>
</dbReference>
<dbReference type="PANTHER" id="PTHR48090">
    <property type="entry name" value="UNDECAPRENYL-PHOSPHATE 4-DEOXY-4-FORMAMIDO-L-ARABINOSE TRANSFERASE-RELATED"/>
    <property type="match status" value="1"/>
</dbReference>
<dbReference type="Pfam" id="PF00535">
    <property type="entry name" value="Glycos_transf_2"/>
    <property type="match status" value="1"/>
</dbReference>
<dbReference type="SUPFAM" id="SSF53448">
    <property type="entry name" value="Nucleotide-diphospho-sugar transferases"/>
    <property type="match status" value="1"/>
</dbReference>